<sequence length="140" mass="15368">MGARSTGREAALQMLFAVEAGGSSAPRVVATFWRETPGDPEGRAYADEVVVGVAEDLAAVDEAIRKASTNWRLERMARVDRNVLRLGAWELMNRPEVPRAVILDEAVELAKRYGSEESGAFVNGVLDRIAENLGRVDRDR</sequence>
<gene>
    <name evidence="1" type="primary">nusB</name>
    <name type="ordered locus">sce7269</name>
</gene>
<dbReference type="EMBL" id="AM746676">
    <property type="protein sequence ID" value="CAN97438.1"/>
    <property type="molecule type" value="Genomic_DNA"/>
</dbReference>
<dbReference type="RefSeq" id="WP_012239877.1">
    <property type="nucleotide sequence ID" value="NC_010162.1"/>
</dbReference>
<dbReference type="SMR" id="A9ET18"/>
<dbReference type="STRING" id="448385.sce7269"/>
<dbReference type="KEGG" id="scl:sce7269"/>
<dbReference type="eggNOG" id="COG0781">
    <property type="taxonomic scope" value="Bacteria"/>
</dbReference>
<dbReference type="HOGENOM" id="CLU_087843_3_3_7"/>
<dbReference type="OrthoDB" id="9797817at2"/>
<dbReference type="BioCyc" id="SCEL448385:SCE_RS37245-MONOMER"/>
<dbReference type="Proteomes" id="UP000002139">
    <property type="component" value="Chromosome"/>
</dbReference>
<dbReference type="GO" id="GO:0005829">
    <property type="term" value="C:cytosol"/>
    <property type="evidence" value="ECO:0007669"/>
    <property type="project" value="TreeGrafter"/>
</dbReference>
<dbReference type="GO" id="GO:0003723">
    <property type="term" value="F:RNA binding"/>
    <property type="evidence" value="ECO:0007669"/>
    <property type="project" value="UniProtKB-UniRule"/>
</dbReference>
<dbReference type="GO" id="GO:0006353">
    <property type="term" value="P:DNA-templated transcription termination"/>
    <property type="evidence" value="ECO:0007669"/>
    <property type="project" value="UniProtKB-UniRule"/>
</dbReference>
<dbReference type="GO" id="GO:0031564">
    <property type="term" value="P:transcription antitermination"/>
    <property type="evidence" value="ECO:0007669"/>
    <property type="project" value="UniProtKB-KW"/>
</dbReference>
<dbReference type="CDD" id="cd00619">
    <property type="entry name" value="Terminator_NusB"/>
    <property type="match status" value="1"/>
</dbReference>
<dbReference type="Gene3D" id="1.10.940.10">
    <property type="entry name" value="NusB-like"/>
    <property type="match status" value="1"/>
</dbReference>
<dbReference type="HAMAP" id="MF_00073">
    <property type="entry name" value="NusB"/>
    <property type="match status" value="1"/>
</dbReference>
<dbReference type="InterPro" id="IPR035926">
    <property type="entry name" value="NusB-like_sf"/>
</dbReference>
<dbReference type="InterPro" id="IPR011605">
    <property type="entry name" value="NusB_fam"/>
</dbReference>
<dbReference type="InterPro" id="IPR006027">
    <property type="entry name" value="NusB_RsmB_TIM44"/>
</dbReference>
<dbReference type="NCBIfam" id="TIGR01951">
    <property type="entry name" value="nusB"/>
    <property type="match status" value="1"/>
</dbReference>
<dbReference type="PANTHER" id="PTHR11078:SF3">
    <property type="entry name" value="ANTITERMINATION NUSB DOMAIN-CONTAINING PROTEIN"/>
    <property type="match status" value="1"/>
</dbReference>
<dbReference type="PANTHER" id="PTHR11078">
    <property type="entry name" value="N UTILIZATION SUBSTANCE PROTEIN B-RELATED"/>
    <property type="match status" value="1"/>
</dbReference>
<dbReference type="Pfam" id="PF01029">
    <property type="entry name" value="NusB"/>
    <property type="match status" value="1"/>
</dbReference>
<dbReference type="SUPFAM" id="SSF48013">
    <property type="entry name" value="NusB-like"/>
    <property type="match status" value="1"/>
</dbReference>
<feature type="chain" id="PRO_1000075207" description="Transcription antitermination protein NusB">
    <location>
        <begin position="1"/>
        <end position="140"/>
    </location>
</feature>
<name>NUSB_SORC5</name>
<proteinExistence type="inferred from homology"/>
<organism>
    <name type="scientific">Sorangium cellulosum (strain So ce56)</name>
    <name type="common">Polyangium cellulosum (strain So ce56)</name>
    <dbReference type="NCBI Taxonomy" id="448385"/>
    <lineage>
        <taxon>Bacteria</taxon>
        <taxon>Pseudomonadati</taxon>
        <taxon>Myxococcota</taxon>
        <taxon>Polyangia</taxon>
        <taxon>Polyangiales</taxon>
        <taxon>Polyangiaceae</taxon>
        <taxon>Sorangium</taxon>
    </lineage>
</organism>
<accession>A9ET18</accession>
<reference key="1">
    <citation type="journal article" date="2007" name="Nat. Biotechnol.">
        <title>Complete genome sequence of the myxobacterium Sorangium cellulosum.</title>
        <authorList>
            <person name="Schneiker S."/>
            <person name="Perlova O."/>
            <person name="Kaiser O."/>
            <person name="Gerth K."/>
            <person name="Alici A."/>
            <person name="Altmeyer M.O."/>
            <person name="Bartels D."/>
            <person name="Bekel T."/>
            <person name="Beyer S."/>
            <person name="Bode E."/>
            <person name="Bode H.B."/>
            <person name="Bolten C.J."/>
            <person name="Choudhuri J.V."/>
            <person name="Doss S."/>
            <person name="Elnakady Y.A."/>
            <person name="Frank B."/>
            <person name="Gaigalat L."/>
            <person name="Goesmann A."/>
            <person name="Groeger C."/>
            <person name="Gross F."/>
            <person name="Jelsbak L."/>
            <person name="Jelsbak L."/>
            <person name="Kalinowski J."/>
            <person name="Kegler C."/>
            <person name="Knauber T."/>
            <person name="Konietzny S."/>
            <person name="Kopp M."/>
            <person name="Krause L."/>
            <person name="Krug D."/>
            <person name="Linke B."/>
            <person name="Mahmud T."/>
            <person name="Martinez-Arias R."/>
            <person name="McHardy A.C."/>
            <person name="Merai M."/>
            <person name="Meyer F."/>
            <person name="Mormann S."/>
            <person name="Munoz-Dorado J."/>
            <person name="Perez J."/>
            <person name="Pradella S."/>
            <person name="Rachid S."/>
            <person name="Raddatz G."/>
            <person name="Rosenau F."/>
            <person name="Rueckert C."/>
            <person name="Sasse F."/>
            <person name="Scharfe M."/>
            <person name="Schuster S.C."/>
            <person name="Suen G."/>
            <person name="Treuner-Lange A."/>
            <person name="Velicer G.J."/>
            <person name="Vorholter F.-J."/>
            <person name="Weissman K.J."/>
            <person name="Welch R.D."/>
            <person name="Wenzel S.C."/>
            <person name="Whitworth D.E."/>
            <person name="Wilhelm S."/>
            <person name="Wittmann C."/>
            <person name="Bloecker H."/>
            <person name="Puehler A."/>
            <person name="Mueller R."/>
        </authorList>
    </citation>
    <scope>NUCLEOTIDE SEQUENCE [LARGE SCALE GENOMIC DNA]</scope>
    <source>
        <strain>So ce56</strain>
    </source>
</reference>
<keyword id="KW-1185">Reference proteome</keyword>
<keyword id="KW-0694">RNA-binding</keyword>
<keyword id="KW-0804">Transcription</keyword>
<keyword id="KW-0889">Transcription antitermination</keyword>
<keyword id="KW-0805">Transcription regulation</keyword>
<protein>
    <recommendedName>
        <fullName evidence="1">Transcription antitermination protein NusB</fullName>
    </recommendedName>
    <alternativeName>
        <fullName evidence="1">Antitermination factor NusB</fullName>
    </alternativeName>
</protein>
<comment type="function">
    <text evidence="1">Involved in transcription antitermination. Required for transcription of ribosomal RNA (rRNA) genes. Binds specifically to the boxA antiterminator sequence of the ribosomal RNA (rrn) operons.</text>
</comment>
<comment type="similarity">
    <text evidence="1">Belongs to the NusB family.</text>
</comment>
<evidence type="ECO:0000255" key="1">
    <source>
        <dbReference type="HAMAP-Rule" id="MF_00073"/>
    </source>
</evidence>